<reference key="1">
    <citation type="journal article" date="2007" name="Nat. Genet.">
        <title>Genomic analysis of Bartonella identifies type IV secretion systems as host adaptability factors.</title>
        <authorList>
            <person name="Saenz H.L."/>
            <person name="Engel P."/>
            <person name="Stoeckli M.C."/>
            <person name="Lanz C."/>
            <person name="Raddatz G."/>
            <person name="Vayssier-Taussat M."/>
            <person name="Birtles R."/>
            <person name="Schuster S.C."/>
            <person name="Dehio C."/>
        </authorList>
    </citation>
    <scope>NUCLEOTIDE SEQUENCE [LARGE SCALE GENOMIC DNA]</scope>
    <source>
        <strain>CIP 105476 / IBS 506</strain>
    </source>
</reference>
<gene>
    <name evidence="1" type="primary">rplS</name>
    <name type="ordered locus">BT_2546</name>
</gene>
<proteinExistence type="inferred from homology"/>
<feature type="chain" id="PRO_1000080337" description="Large ribosomal subunit protein bL19">
    <location>
        <begin position="1"/>
        <end position="146"/>
    </location>
</feature>
<feature type="region of interest" description="Disordered" evidence="2">
    <location>
        <begin position="119"/>
        <end position="146"/>
    </location>
</feature>
<dbReference type="EMBL" id="AM260525">
    <property type="protein sequence ID" value="CAK02510.1"/>
    <property type="molecule type" value="Genomic_DNA"/>
</dbReference>
<dbReference type="RefSeq" id="WP_012232544.1">
    <property type="nucleotide sequence ID" value="NC_010161.1"/>
</dbReference>
<dbReference type="SMR" id="A9IZA0"/>
<dbReference type="KEGG" id="btr:BT_2546"/>
<dbReference type="eggNOG" id="COG0335">
    <property type="taxonomic scope" value="Bacteria"/>
</dbReference>
<dbReference type="HOGENOM" id="CLU_103507_0_2_5"/>
<dbReference type="Proteomes" id="UP000001592">
    <property type="component" value="Chromosome"/>
</dbReference>
<dbReference type="GO" id="GO:0022625">
    <property type="term" value="C:cytosolic large ribosomal subunit"/>
    <property type="evidence" value="ECO:0007669"/>
    <property type="project" value="TreeGrafter"/>
</dbReference>
<dbReference type="GO" id="GO:0003735">
    <property type="term" value="F:structural constituent of ribosome"/>
    <property type="evidence" value="ECO:0007669"/>
    <property type="project" value="InterPro"/>
</dbReference>
<dbReference type="GO" id="GO:0006412">
    <property type="term" value="P:translation"/>
    <property type="evidence" value="ECO:0007669"/>
    <property type="project" value="UniProtKB-UniRule"/>
</dbReference>
<dbReference type="FunFam" id="2.30.30.790:FF:000001">
    <property type="entry name" value="50S ribosomal protein L19"/>
    <property type="match status" value="1"/>
</dbReference>
<dbReference type="Gene3D" id="2.30.30.790">
    <property type="match status" value="1"/>
</dbReference>
<dbReference type="HAMAP" id="MF_00402">
    <property type="entry name" value="Ribosomal_bL19"/>
    <property type="match status" value="1"/>
</dbReference>
<dbReference type="InterPro" id="IPR001857">
    <property type="entry name" value="Ribosomal_bL19"/>
</dbReference>
<dbReference type="InterPro" id="IPR018257">
    <property type="entry name" value="Ribosomal_bL19_CS"/>
</dbReference>
<dbReference type="InterPro" id="IPR038657">
    <property type="entry name" value="Ribosomal_bL19_sf"/>
</dbReference>
<dbReference type="InterPro" id="IPR008991">
    <property type="entry name" value="Translation_prot_SH3-like_sf"/>
</dbReference>
<dbReference type="NCBIfam" id="TIGR01024">
    <property type="entry name" value="rplS_bact"/>
    <property type="match status" value="1"/>
</dbReference>
<dbReference type="PANTHER" id="PTHR15680:SF9">
    <property type="entry name" value="LARGE RIBOSOMAL SUBUNIT PROTEIN BL19M"/>
    <property type="match status" value="1"/>
</dbReference>
<dbReference type="PANTHER" id="PTHR15680">
    <property type="entry name" value="RIBOSOMAL PROTEIN L19"/>
    <property type="match status" value="1"/>
</dbReference>
<dbReference type="Pfam" id="PF01245">
    <property type="entry name" value="Ribosomal_L19"/>
    <property type="match status" value="1"/>
</dbReference>
<dbReference type="PIRSF" id="PIRSF002191">
    <property type="entry name" value="Ribosomal_L19"/>
    <property type="match status" value="1"/>
</dbReference>
<dbReference type="PRINTS" id="PR00061">
    <property type="entry name" value="RIBOSOMALL19"/>
</dbReference>
<dbReference type="SUPFAM" id="SSF50104">
    <property type="entry name" value="Translation proteins SH3-like domain"/>
    <property type="match status" value="1"/>
</dbReference>
<dbReference type="PROSITE" id="PS01015">
    <property type="entry name" value="RIBOSOMAL_L19"/>
    <property type="match status" value="1"/>
</dbReference>
<evidence type="ECO:0000255" key="1">
    <source>
        <dbReference type="HAMAP-Rule" id="MF_00402"/>
    </source>
</evidence>
<evidence type="ECO:0000256" key="2">
    <source>
        <dbReference type="SAM" id="MobiDB-lite"/>
    </source>
</evidence>
<evidence type="ECO:0000305" key="3"/>
<keyword id="KW-0687">Ribonucleoprotein</keyword>
<keyword id="KW-0689">Ribosomal protein</keyword>
<sequence length="146" mass="16449">MNIIAQLEAEQCAKIEEKRQFPAFKPGDTVRVMVRVTEGTRTRVQAYEGVCIARSGGGLNETFTVRKISYGEGVERVFPVYSPLIEAVELVRRGKVRRAKLYYLRGLRGKAARIAEKRDYRKKGEKGVEKVETTPVSADIETQVAE</sequence>
<name>RL19_BART1</name>
<comment type="function">
    <text evidence="1">This protein is located at the 30S-50S ribosomal subunit interface and may play a role in the structure and function of the aminoacyl-tRNA binding site.</text>
</comment>
<comment type="similarity">
    <text evidence="1">Belongs to the bacterial ribosomal protein bL19 family.</text>
</comment>
<protein>
    <recommendedName>
        <fullName evidence="1">Large ribosomal subunit protein bL19</fullName>
    </recommendedName>
    <alternativeName>
        <fullName evidence="3">50S ribosomal protein L19</fullName>
    </alternativeName>
</protein>
<accession>A9IZA0</accession>
<organism>
    <name type="scientific">Bartonella tribocorum (strain CIP 105476 / IBS 506)</name>
    <dbReference type="NCBI Taxonomy" id="382640"/>
    <lineage>
        <taxon>Bacteria</taxon>
        <taxon>Pseudomonadati</taxon>
        <taxon>Pseudomonadota</taxon>
        <taxon>Alphaproteobacteria</taxon>
        <taxon>Hyphomicrobiales</taxon>
        <taxon>Bartonellaceae</taxon>
        <taxon>Bartonella</taxon>
    </lineage>
</organism>